<proteinExistence type="inferred from homology"/>
<gene>
    <name evidence="1" type="primary">dadD</name>
    <name type="ordered locus">Mevan_0800</name>
</gene>
<protein>
    <recommendedName>
        <fullName evidence="1">5'-deoxyadenosine deaminase</fullName>
        <shortName evidence="1">5'-dA deaminase</shortName>
        <ecNumber evidence="1">3.5.4.41</ecNumber>
    </recommendedName>
    <alternativeName>
        <fullName evidence="1">5'-methylthioadenosine deaminase</fullName>
        <shortName evidence="1">MTA deaminase</shortName>
        <ecNumber evidence="1">3.5.4.31</ecNumber>
    </alternativeName>
    <alternativeName>
        <fullName evidence="1">Adenosine deaminase</fullName>
        <ecNumber evidence="1">3.5.4.4</ecNumber>
    </alternativeName>
    <alternativeName>
        <fullName evidence="1">S-adenosylhomocysteine deaminase</fullName>
        <shortName evidence="1">SAH deaminase</shortName>
        <ecNumber evidence="1">3.5.4.28</ecNumber>
    </alternativeName>
</protein>
<comment type="function">
    <text evidence="1">Catalyzes the deamination of three SAM-derived enzymatic products, namely 5'-deoxyadenosine, S-adenosyl-L-homocysteine, and 5'-methylthioadenosine, to produce the inosine analogs. Can also deaminate adenosine. The preferred substrate for this enzyme is 5'-deoxyadenosine, but all these substrates are efficiently deaminated. Likely functions in a S-adenosyl-L-methionine (SAM) recycling pathway from S-adenosyl-L-homocysteine (SAH) produced from SAM-dependent methylation reactions. May also be involved in the recycling of 5'-deoxyadenosine, whereupon the 5'-deoxyribose moiety of 5'-deoxyinosine is further metabolized to deoxyhexoses used for the biosynthesis of aromatic amino acids in methanogens.</text>
</comment>
<comment type="catalytic activity">
    <reaction evidence="1">
        <text>5'-deoxyadenosine + H2O + H(+) = 5'-deoxyinosine + NH4(+)</text>
        <dbReference type="Rhea" id="RHEA:42892"/>
        <dbReference type="ChEBI" id="CHEBI:15377"/>
        <dbReference type="ChEBI" id="CHEBI:15378"/>
        <dbReference type="ChEBI" id="CHEBI:17319"/>
        <dbReference type="ChEBI" id="CHEBI:28938"/>
        <dbReference type="ChEBI" id="CHEBI:82775"/>
        <dbReference type="EC" id="3.5.4.41"/>
    </reaction>
    <physiologicalReaction direction="left-to-right" evidence="1">
        <dbReference type="Rhea" id="RHEA:42893"/>
    </physiologicalReaction>
</comment>
<comment type="catalytic activity">
    <reaction evidence="1">
        <text>S-adenosyl-L-homocysteine + H2O + H(+) = S-inosyl-L-homocysteine + NH4(+)</text>
        <dbReference type="Rhea" id="RHEA:20716"/>
        <dbReference type="ChEBI" id="CHEBI:15377"/>
        <dbReference type="ChEBI" id="CHEBI:15378"/>
        <dbReference type="ChEBI" id="CHEBI:28938"/>
        <dbReference type="ChEBI" id="CHEBI:57856"/>
        <dbReference type="ChEBI" id="CHEBI:57985"/>
        <dbReference type="EC" id="3.5.4.28"/>
    </reaction>
    <physiologicalReaction direction="left-to-right" evidence="1">
        <dbReference type="Rhea" id="RHEA:20717"/>
    </physiologicalReaction>
</comment>
<comment type="catalytic activity">
    <reaction evidence="1">
        <text>S-methyl-5'-thioadenosine + H2O + H(+) = S-methyl-5'-thioinosine + NH4(+)</text>
        <dbReference type="Rhea" id="RHEA:25025"/>
        <dbReference type="ChEBI" id="CHEBI:15377"/>
        <dbReference type="ChEBI" id="CHEBI:15378"/>
        <dbReference type="ChEBI" id="CHEBI:17509"/>
        <dbReference type="ChEBI" id="CHEBI:28938"/>
        <dbReference type="ChEBI" id="CHEBI:48595"/>
        <dbReference type="EC" id="3.5.4.31"/>
    </reaction>
    <physiologicalReaction direction="left-to-right" evidence="1">
        <dbReference type="Rhea" id="RHEA:25026"/>
    </physiologicalReaction>
</comment>
<comment type="catalytic activity">
    <reaction evidence="1">
        <text>adenosine + H2O + H(+) = inosine + NH4(+)</text>
        <dbReference type="Rhea" id="RHEA:24408"/>
        <dbReference type="ChEBI" id="CHEBI:15377"/>
        <dbReference type="ChEBI" id="CHEBI:15378"/>
        <dbReference type="ChEBI" id="CHEBI:16335"/>
        <dbReference type="ChEBI" id="CHEBI:17596"/>
        <dbReference type="ChEBI" id="CHEBI:28938"/>
        <dbReference type="EC" id="3.5.4.4"/>
    </reaction>
    <physiologicalReaction direction="left-to-right" evidence="1">
        <dbReference type="Rhea" id="RHEA:24409"/>
    </physiologicalReaction>
</comment>
<comment type="cofactor">
    <cofactor evidence="1">
        <name>Zn(2+)</name>
        <dbReference type="ChEBI" id="CHEBI:29105"/>
    </cofactor>
    <text evidence="1">Binds 1 zinc ion per subunit.</text>
</comment>
<comment type="pathway">
    <text evidence="1">Amino-acid biosynthesis; S-adenosyl-L-methionine biosynthesis.</text>
</comment>
<comment type="subunit">
    <text evidence="1">Homotetramer.</text>
</comment>
<comment type="miscellaneous">
    <text evidence="1">SAH is a product of SAM methyltransferases and is known to be a feedback inhibitor of these enzymes. As a result of this inhibition, organisms have evolved efficient enzymes to metabolize SAH via different pathways. The pathway found in methanogens differs from the canonical pathway, it uses the deamination of S-adenosyl-L-homocysteine to form S-inosyl-L-homocysteine for the regeneration of SAM from S-adenosyl-L-homocysteine. 5'-deoxyadenosine is a radical SAM enzyme reaction product which strongly inhibits radical SAM enzymes. A pathway for removing this product must be present in methanogens where the MTA/SAH nucleosidase which normally metabolizes this compound is absent.</text>
</comment>
<comment type="similarity">
    <text evidence="1">Belongs to the metallo-dependent hydrolases superfamily. MTA/SAH deaminase family.</text>
</comment>
<dbReference type="EC" id="3.5.4.41" evidence="1"/>
<dbReference type="EC" id="3.5.4.31" evidence="1"/>
<dbReference type="EC" id="3.5.4.4" evidence="1"/>
<dbReference type="EC" id="3.5.4.28" evidence="1"/>
<dbReference type="EMBL" id="CP000742">
    <property type="protein sequence ID" value="ABR54706.1"/>
    <property type="molecule type" value="Genomic_DNA"/>
</dbReference>
<dbReference type="RefSeq" id="WP_011972608.1">
    <property type="nucleotide sequence ID" value="NC_009634.1"/>
</dbReference>
<dbReference type="SMR" id="A6UQD4"/>
<dbReference type="STRING" id="406327.Mevan_0800"/>
<dbReference type="GeneID" id="5324649"/>
<dbReference type="KEGG" id="mvn:Mevan_0800"/>
<dbReference type="eggNOG" id="arCOG00695">
    <property type="taxonomic scope" value="Archaea"/>
</dbReference>
<dbReference type="HOGENOM" id="CLU_012358_2_1_2"/>
<dbReference type="OrthoDB" id="372084at2157"/>
<dbReference type="UniPathway" id="UPA00315"/>
<dbReference type="Proteomes" id="UP000001107">
    <property type="component" value="Chromosome"/>
</dbReference>
<dbReference type="GO" id="GO:0090613">
    <property type="term" value="F:5'-deoxyadenosine deaminase activity"/>
    <property type="evidence" value="ECO:0007669"/>
    <property type="project" value="UniProtKB-UniRule"/>
</dbReference>
<dbReference type="GO" id="GO:0090614">
    <property type="term" value="F:5'-methylthioadenosine deaminase activity"/>
    <property type="evidence" value="ECO:0007669"/>
    <property type="project" value="UniProtKB-EC"/>
</dbReference>
<dbReference type="GO" id="GO:0004000">
    <property type="term" value="F:adenosine deaminase activity"/>
    <property type="evidence" value="ECO:0007669"/>
    <property type="project" value="UniProtKB-UniRule"/>
</dbReference>
<dbReference type="GO" id="GO:0046872">
    <property type="term" value="F:metal ion binding"/>
    <property type="evidence" value="ECO:0007669"/>
    <property type="project" value="UniProtKB-KW"/>
</dbReference>
<dbReference type="GO" id="GO:0050270">
    <property type="term" value="F:S-adenosylhomocysteine deaminase activity"/>
    <property type="evidence" value="ECO:0007669"/>
    <property type="project" value="UniProtKB-EC"/>
</dbReference>
<dbReference type="GO" id="GO:0006556">
    <property type="term" value="P:S-adenosylmethionine biosynthetic process"/>
    <property type="evidence" value="ECO:0007669"/>
    <property type="project" value="UniProtKB-UniRule"/>
</dbReference>
<dbReference type="CDD" id="cd01298">
    <property type="entry name" value="ATZ_TRZ_like"/>
    <property type="match status" value="1"/>
</dbReference>
<dbReference type="FunFam" id="3.20.20.140:FF:000014">
    <property type="entry name" value="5-methylthioadenosine/S-adenosylhomocysteine deaminase"/>
    <property type="match status" value="1"/>
</dbReference>
<dbReference type="Gene3D" id="3.20.20.140">
    <property type="entry name" value="Metal-dependent hydrolases"/>
    <property type="match status" value="1"/>
</dbReference>
<dbReference type="Gene3D" id="2.30.40.10">
    <property type="entry name" value="Urease, subunit C, domain 1"/>
    <property type="match status" value="1"/>
</dbReference>
<dbReference type="HAMAP" id="MF_01281">
    <property type="entry name" value="MTA_SAH_deamin"/>
    <property type="match status" value="1"/>
</dbReference>
<dbReference type="InterPro" id="IPR006680">
    <property type="entry name" value="Amidohydro-rel"/>
</dbReference>
<dbReference type="InterPro" id="IPR023512">
    <property type="entry name" value="Deaminase_MtaD/DadD"/>
</dbReference>
<dbReference type="InterPro" id="IPR011059">
    <property type="entry name" value="Metal-dep_hydrolase_composite"/>
</dbReference>
<dbReference type="InterPro" id="IPR032466">
    <property type="entry name" value="Metal_Hydrolase"/>
</dbReference>
<dbReference type="InterPro" id="IPR050287">
    <property type="entry name" value="MTA/SAH_deaminase"/>
</dbReference>
<dbReference type="PANTHER" id="PTHR43794:SF11">
    <property type="entry name" value="AMIDOHYDROLASE-RELATED DOMAIN-CONTAINING PROTEIN"/>
    <property type="match status" value="1"/>
</dbReference>
<dbReference type="PANTHER" id="PTHR43794">
    <property type="entry name" value="AMINOHYDROLASE SSNA-RELATED"/>
    <property type="match status" value="1"/>
</dbReference>
<dbReference type="Pfam" id="PF01979">
    <property type="entry name" value="Amidohydro_1"/>
    <property type="match status" value="1"/>
</dbReference>
<dbReference type="SUPFAM" id="SSF51338">
    <property type="entry name" value="Composite domain of metallo-dependent hydrolases"/>
    <property type="match status" value="1"/>
</dbReference>
<dbReference type="SUPFAM" id="SSF51556">
    <property type="entry name" value="Metallo-dependent hydrolases"/>
    <property type="match status" value="1"/>
</dbReference>
<feature type="chain" id="PRO_0000312475" description="5'-deoxyadenosine deaminase">
    <location>
        <begin position="1"/>
        <end position="422"/>
    </location>
</feature>
<feature type="binding site" evidence="1">
    <location>
        <position position="57"/>
    </location>
    <ligand>
        <name>Zn(2+)</name>
        <dbReference type="ChEBI" id="CHEBI:29105"/>
    </ligand>
</feature>
<feature type="binding site" evidence="1">
    <location>
        <position position="59"/>
    </location>
    <ligand>
        <name>Zn(2+)</name>
        <dbReference type="ChEBI" id="CHEBI:29105"/>
    </ligand>
</feature>
<feature type="binding site" evidence="1">
    <location>
        <position position="86"/>
    </location>
    <ligand>
        <name>substrate</name>
    </ligand>
</feature>
<feature type="binding site" evidence="1">
    <location>
        <position position="178"/>
    </location>
    <ligand>
        <name>substrate</name>
    </ligand>
</feature>
<feature type="binding site" evidence="1">
    <location>
        <position position="205"/>
    </location>
    <ligand>
        <name>Zn(2+)</name>
        <dbReference type="ChEBI" id="CHEBI:29105"/>
    </ligand>
</feature>
<feature type="binding site" evidence="1">
    <location>
        <position position="208"/>
    </location>
    <ligand>
        <name>substrate</name>
    </ligand>
</feature>
<feature type="binding site" evidence="1">
    <location>
        <position position="294"/>
    </location>
    <ligand>
        <name>substrate</name>
    </ligand>
</feature>
<feature type="binding site" evidence="1">
    <location>
        <position position="294"/>
    </location>
    <ligand>
        <name>Zn(2+)</name>
        <dbReference type="ChEBI" id="CHEBI:29105"/>
    </ligand>
</feature>
<accession>A6UQD4</accession>
<keyword id="KW-0378">Hydrolase</keyword>
<keyword id="KW-0479">Metal-binding</keyword>
<keyword id="KW-0862">Zinc</keyword>
<sequence length="422" mass="46767">MILVKDAIINGKKQDLLVEGNIIKKIGNVPISEVSKDETEIIDGKNCILIPGLVNTHTHIPMSLFRGVADDIPLMEWLSGHIWPMESKLNEKIVYAGTLLGAVEMIKSGTTAFNDMYFFLDSIIKAVDETGIRSTIAYGMIDLFNEEKREKELKSAKKSIEMIKKLNNSRITGALGPHAPYTCSKELLESTNALAREYNVPIHIHMNETVDEINQVLEKTKMRPFEYLNSFGFFDNVTTVCAHCVHLNDSEIKIIKEKNIFVAHNPISNLKLASGVSPVAKLLENEVNITLGTDGCGSNNSLNLFEEMKTAALIHKGVNLNPVLVTAKEAFEFGTLNGAKALNINSGEIKEGKLADFALINVKKPYLTPRENIESHLVYSFNGAVDSVVIDGKLTLKDGKMVTIDEEKVYELAEEAYLELTK</sequence>
<reference key="1">
    <citation type="submission" date="2007-06" db="EMBL/GenBank/DDBJ databases">
        <title>Complete sequence of Methanococcus vannielii SB.</title>
        <authorList>
            <consortium name="US DOE Joint Genome Institute"/>
            <person name="Copeland A."/>
            <person name="Lucas S."/>
            <person name="Lapidus A."/>
            <person name="Barry K."/>
            <person name="Glavina del Rio T."/>
            <person name="Dalin E."/>
            <person name="Tice H."/>
            <person name="Pitluck S."/>
            <person name="Chain P."/>
            <person name="Malfatti S."/>
            <person name="Shin M."/>
            <person name="Vergez L."/>
            <person name="Schmutz J."/>
            <person name="Larimer F."/>
            <person name="Land M."/>
            <person name="Hauser L."/>
            <person name="Kyrpides N."/>
            <person name="Anderson I."/>
            <person name="Sieprawska-Lupa M."/>
            <person name="Whitman W.B."/>
            <person name="Richardson P."/>
        </authorList>
    </citation>
    <scope>NUCLEOTIDE SEQUENCE [LARGE SCALE GENOMIC DNA]</scope>
    <source>
        <strain>ATCC 35089 / DSM 1224 / JCM 13029 / OCM 148 / SB</strain>
    </source>
</reference>
<evidence type="ECO:0000255" key="1">
    <source>
        <dbReference type="HAMAP-Rule" id="MF_01281"/>
    </source>
</evidence>
<name>DADD_METVS</name>
<organism>
    <name type="scientific">Methanococcus vannielii (strain ATCC 35089 / DSM 1224 / JCM 13029 / OCM 148 / SB)</name>
    <dbReference type="NCBI Taxonomy" id="406327"/>
    <lineage>
        <taxon>Archaea</taxon>
        <taxon>Methanobacteriati</taxon>
        <taxon>Methanobacteriota</taxon>
        <taxon>Methanomada group</taxon>
        <taxon>Methanococci</taxon>
        <taxon>Methanococcales</taxon>
        <taxon>Methanococcaceae</taxon>
        <taxon>Methanococcus</taxon>
    </lineage>
</organism>